<gene>
    <name evidence="1" type="primary">rpmC</name>
    <name type="ordered locus">BAB1_1247</name>
</gene>
<reference key="1">
    <citation type="journal article" date="2005" name="Infect. Immun.">
        <title>Whole-genome analyses of speciation events in pathogenic Brucellae.</title>
        <authorList>
            <person name="Chain P.S."/>
            <person name="Comerci D.J."/>
            <person name="Tolmasky M.E."/>
            <person name="Larimer F.W."/>
            <person name="Malfatti S.A."/>
            <person name="Vergez L.M."/>
            <person name="Aguero F."/>
            <person name="Land M.L."/>
            <person name="Ugalde R.A."/>
            <person name="Garcia E."/>
        </authorList>
    </citation>
    <scope>NUCLEOTIDE SEQUENCE [LARGE SCALE GENOMIC DNA]</scope>
    <source>
        <strain>2308</strain>
    </source>
</reference>
<proteinExistence type="inferred from homology"/>
<comment type="similarity">
    <text evidence="1">Belongs to the universal ribosomal protein uL29 family.</text>
</comment>
<feature type="chain" id="PRO_1000007428" description="Large ribosomal subunit protein uL29">
    <location>
        <begin position="1"/>
        <end position="66"/>
    </location>
</feature>
<evidence type="ECO:0000255" key="1">
    <source>
        <dbReference type="HAMAP-Rule" id="MF_00374"/>
    </source>
</evidence>
<evidence type="ECO:0000305" key="2"/>
<keyword id="KW-1185">Reference proteome</keyword>
<keyword id="KW-0687">Ribonucleoprotein</keyword>
<keyword id="KW-0689">Ribosomal protein</keyword>
<sequence>MKAADVRAKSLDQLNDELGTLKKEQFNLRFQKATGQLEKTARVKQVRRDIARIKTIARQKAAESKA</sequence>
<accession>Q2YRA3</accession>
<protein>
    <recommendedName>
        <fullName evidence="1">Large ribosomal subunit protein uL29</fullName>
    </recommendedName>
    <alternativeName>
        <fullName evidence="2">50S ribosomal protein L29</fullName>
    </alternativeName>
</protein>
<name>RL29_BRUA2</name>
<organism>
    <name type="scientific">Brucella abortus (strain 2308)</name>
    <dbReference type="NCBI Taxonomy" id="359391"/>
    <lineage>
        <taxon>Bacteria</taxon>
        <taxon>Pseudomonadati</taxon>
        <taxon>Pseudomonadota</taxon>
        <taxon>Alphaproteobacteria</taxon>
        <taxon>Hyphomicrobiales</taxon>
        <taxon>Brucellaceae</taxon>
        <taxon>Brucella/Ochrobactrum group</taxon>
        <taxon>Brucella</taxon>
    </lineage>
</organism>
<dbReference type="EMBL" id="AM040264">
    <property type="protein sequence ID" value="CAJ11203.1"/>
    <property type="molecule type" value="Genomic_DNA"/>
</dbReference>
<dbReference type="RefSeq" id="WP_002964354.1">
    <property type="nucleotide sequence ID" value="NZ_KN046823.1"/>
</dbReference>
<dbReference type="SMR" id="Q2YRA3"/>
<dbReference type="STRING" id="359391.BAB1_1247"/>
<dbReference type="GeneID" id="97533532"/>
<dbReference type="KEGG" id="bmf:BAB1_1247"/>
<dbReference type="PATRIC" id="fig|359391.11.peg.147"/>
<dbReference type="HOGENOM" id="CLU_158491_1_0_5"/>
<dbReference type="Proteomes" id="UP000002719">
    <property type="component" value="Chromosome I"/>
</dbReference>
<dbReference type="GO" id="GO:0022625">
    <property type="term" value="C:cytosolic large ribosomal subunit"/>
    <property type="evidence" value="ECO:0007669"/>
    <property type="project" value="TreeGrafter"/>
</dbReference>
<dbReference type="GO" id="GO:0003735">
    <property type="term" value="F:structural constituent of ribosome"/>
    <property type="evidence" value="ECO:0007669"/>
    <property type="project" value="InterPro"/>
</dbReference>
<dbReference type="GO" id="GO:0006412">
    <property type="term" value="P:translation"/>
    <property type="evidence" value="ECO:0007669"/>
    <property type="project" value="UniProtKB-UniRule"/>
</dbReference>
<dbReference type="CDD" id="cd00427">
    <property type="entry name" value="Ribosomal_L29_HIP"/>
    <property type="match status" value="1"/>
</dbReference>
<dbReference type="FunFam" id="1.10.287.310:FF:000001">
    <property type="entry name" value="50S ribosomal protein L29"/>
    <property type="match status" value="1"/>
</dbReference>
<dbReference type="Gene3D" id="1.10.287.310">
    <property type="match status" value="1"/>
</dbReference>
<dbReference type="HAMAP" id="MF_00374">
    <property type="entry name" value="Ribosomal_uL29"/>
    <property type="match status" value="1"/>
</dbReference>
<dbReference type="InterPro" id="IPR050063">
    <property type="entry name" value="Ribosomal_protein_uL29"/>
</dbReference>
<dbReference type="InterPro" id="IPR001854">
    <property type="entry name" value="Ribosomal_uL29"/>
</dbReference>
<dbReference type="InterPro" id="IPR018254">
    <property type="entry name" value="Ribosomal_uL29_CS"/>
</dbReference>
<dbReference type="InterPro" id="IPR036049">
    <property type="entry name" value="Ribosomal_uL29_sf"/>
</dbReference>
<dbReference type="NCBIfam" id="TIGR00012">
    <property type="entry name" value="L29"/>
    <property type="match status" value="1"/>
</dbReference>
<dbReference type="PANTHER" id="PTHR10916">
    <property type="entry name" value="60S RIBOSOMAL PROTEIN L35/50S RIBOSOMAL PROTEIN L29"/>
    <property type="match status" value="1"/>
</dbReference>
<dbReference type="PANTHER" id="PTHR10916:SF0">
    <property type="entry name" value="LARGE RIBOSOMAL SUBUNIT PROTEIN UL29C"/>
    <property type="match status" value="1"/>
</dbReference>
<dbReference type="Pfam" id="PF00831">
    <property type="entry name" value="Ribosomal_L29"/>
    <property type="match status" value="1"/>
</dbReference>
<dbReference type="SUPFAM" id="SSF46561">
    <property type="entry name" value="Ribosomal protein L29 (L29p)"/>
    <property type="match status" value="1"/>
</dbReference>
<dbReference type="PROSITE" id="PS00579">
    <property type="entry name" value="RIBOSOMAL_L29"/>
    <property type="match status" value="1"/>
</dbReference>